<reference key="1">
    <citation type="journal article" date="1997" name="Peptides">
        <title>Isolation and structural elucidation of two pyrokinins from the retrocerebral complex of the American cockroach.</title>
        <authorList>
            <person name="Predel R."/>
            <person name="Kellner R."/>
            <person name="Kaufmann R."/>
            <person name="Penzlin H."/>
            <person name="Gaede G."/>
        </authorList>
    </citation>
    <scope>PROTEIN SEQUENCE</scope>
    <scope>AMIDATION AT LEU-9</scope>
    <scope>FUNCTION</scope>
    <scope>MASS SPECTROMETRY</scope>
    <source>
        <tissue>Corpora cardiaca</tissue>
    </source>
</reference>
<reference key="2">
    <citation type="journal article" date="2000" name="J. Comp. Neurol.">
        <title>Tagma-specific distribution of FXPRLamides in the nervous system of the American cockroach.</title>
        <authorList>
            <person name="Predel R."/>
            <person name="Eckert M."/>
        </authorList>
    </citation>
    <scope>TISSUE SPECIFICITY</scope>
</reference>
<feature type="peptide" id="PRO_0000044322" description="Pyrokinin-1">
    <location>
        <begin position="1"/>
        <end position="9"/>
    </location>
</feature>
<feature type="modified residue" description="Leucine amide" evidence="2">
    <location>
        <position position="9"/>
    </location>
</feature>
<accession>P82691</accession>
<comment type="function">
    <text evidence="2">Mediates visceral muscle contractile activity (myotropic activity).</text>
</comment>
<comment type="subcellular location">
    <subcellularLocation>
        <location>Secreted</location>
    </subcellularLocation>
</comment>
<comment type="tissue specificity">
    <text evidence="1">Corpora cardiaca.</text>
</comment>
<comment type="mass spectrometry" mass="1010.4" method="MALDI" evidence="2"/>
<comment type="similarity">
    <text evidence="3">Belongs to the pyrokinin family.</text>
</comment>
<sequence length="9" mass="1011">HTAGFIPRL</sequence>
<organism>
    <name type="scientific">Periplaneta americana</name>
    <name type="common">American cockroach</name>
    <name type="synonym">Blatta americana</name>
    <dbReference type="NCBI Taxonomy" id="6978"/>
    <lineage>
        <taxon>Eukaryota</taxon>
        <taxon>Metazoa</taxon>
        <taxon>Ecdysozoa</taxon>
        <taxon>Arthropoda</taxon>
        <taxon>Hexapoda</taxon>
        <taxon>Insecta</taxon>
        <taxon>Pterygota</taxon>
        <taxon>Neoptera</taxon>
        <taxon>Polyneoptera</taxon>
        <taxon>Dictyoptera</taxon>
        <taxon>Blattodea</taxon>
        <taxon>Blattoidea</taxon>
        <taxon>Blattidae</taxon>
        <taxon>Blattinae</taxon>
        <taxon>Periplaneta</taxon>
    </lineage>
</organism>
<evidence type="ECO:0000269" key="1">
    <source>
    </source>
</evidence>
<evidence type="ECO:0000269" key="2">
    <source>
    </source>
</evidence>
<evidence type="ECO:0000305" key="3"/>
<dbReference type="GO" id="GO:0005576">
    <property type="term" value="C:extracellular region"/>
    <property type="evidence" value="ECO:0007669"/>
    <property type="project" value="UniProtKB-SubCell"/>
</dbReference>
<dbReference type="GO" id="GO:0007218">
    <property type="term" value="P:neuropeptide signaling pathway"/>
    <property type="evidence" value="ECO:0007669"/>
    <property type="project" value="UniProtKB-KW"/>
</dbReference>
<keyword id="KW-0027">Amidation</keyword>
<keyword id="KW-0903">Direct protein sequencing</keyword>
<keyword id="KW-0527">Neuropeptide</keyword>
<keyword id="KW-0964">Secreted</keyword>
<name>PPK1_PERAM</name>
<protein>
    <recommendedName>
        <fullName>Pyrokinin-1</fullName>
        <shortName>Pea-PK-1</shortName>
    </recommendedName>
    <alternativeName>
        <fullName>FXPRL-amide</fullName>
    </alternativeName>
</protein>
<proteinExistence type="evidence at protein level"/>